<feature type="chain" id="PRO_0000146896" description="Adenosylcobinamide-GDP ribazoletransferase">
    <location>
        <begin position="1"/>
        <end position="262"/>
    </location>
</feature>
<feature type="transmembrane region" description="Helical" evidence="1">
    <location>
        <begin position="43"/>
        <end position="63"/>
    </location>
</feature>
<feature type="transmembrane region" description="Helical" evidence="1">
    <location>
        <begin position="66"/>
        <end position="86"/>
    </location>
</feature>
<feature type="transmembrane region" description="Helical" evidence="1">
    <location>
        <begin position="120"/>
        <end position="140"/>
    </location>
</feature>
<feature type="transmembrane region" description="Helical" evidence="1">
    <location>
        <begin position="146"/>
        <end position="166"/>
    </location>
</feature>
<feature type="transmembrane region" description="Helical" evidence="1">
    <location>
        <begin position="191"/>
        <end position="211"/>
    </location>
</feature>
<feature type="transmembrane region" description="Helical" evidence="1">
    <location>
        <begin position="242"/>
        <end position="262"/>
    </location>
</feature>
<organism>
    <name type="scientific">Shewanella oneidensis (strain ATCC 700550 / JCM 31522 / CIP 106686 / LMG 19005 / NCIMB 14063 / MR-1)</name>
    <dbReference type="NCBI Taxonomy" id="211586"/>
    <lineage>
        <taxon>Bacteria</taxon>
        <taxon>Pseudomonadati</taxon>
        <taxon>Pseudomonadota</taxon>
        <taxon>Gammaproteobacteria</taxon>
        <taxon>Alteromonadales</taxon>
        <taxon>Shewanellaceae</taxon>
        <taxon>Shewanella</taxon>
    </lineage>
</organism>
<comment type="function">
    <text evidence="1">Joins adenosylcobinamide-GDP and alpha-ribazole to generate adenosylcobalamin (Ado-cobalamin). Also synthesizes adenosylcobalamin 5'-phosphate from adenosylcobinamide-GDP and alpha-ribazole 5'-phosphate.</text>
</comment>
<comment type="catalytic activity">
    <reaction evidence="1">
        <text>alpha-ribazole + adenosylcob(III)inamide-GDP = adenosylcob(III)alamin + GMP + H(+)</text>
        <dbReference type="Rhea" id="RHEA:16049"/>
        <dbReference type="ChEBI" id="CHEBI:10329"/>
        <dbReference type="ChEBI" id="CHEBI:15378"/>
        <dbReference type="ChEBI" id="CHEBI:18408"/>
        <dbReference type="ChEBI" id="CHEBI:58115"/>
        <dbReference type="ChEBI" id="CHEBI:60487"/>
        <dbReference type="EC" id="2.7.8.26"/>
    </reaction>
</comment>
<comment type="catalytic activity">
    <reaction evidence="1">
        <text>alpha-ribazole 5'-phosphate + adenosylcob(III)inamide-GDP = adenosylcob(III)alamin 5'-phosphate + GMP + H(+)</text>
        <dbReference type="Rhea" id="RHEA:23560"/>
        <dbReference type="ChEBI" id="CHEBI:15378"/>
        <dbReference type="ChEBI" id="CHEBI:57918"/>
        <dbReference type="ChEBI" id="CHEBI:58115"/>
        <dbReference type="ChEBI" id="CHEBI:60487"/>
        <dbReference type="ChEBI" id="CHEBI:60493"/>
        <dbReference type="EC" id="2.7.8.26"/>
    </reaction>
</comment>
<comment type="cofactor">
    <cofactor evidence="1">
        <name>Mg(2+)</name>
        <dbReference type="ChEBI" id="CHEBI:18420"/>
    </cofactor>
</comment>
<comment type="pathway">
    <text evidence="1">Cofactor biosynthesis; adenosylcobalamin biosynthesis; adenosylcobalamin from cob(II)yrinate a,c-diamide: step 7/7.</text>
</comment>
<comment type="subcellular location">
    <subcellularLocation>
        <location evidence="1">Cell inner membrane</location>
        <topology evidence="1">Multi-pass membrane protein</topology>
    </subcellularLocation>
</comment>
<comment type="similarity">
    <text evidence="1">Belongs to the CobS family.</text>
</comment>
<accession>Q8EI17</accession>
<name>COBS_SHEON</name>
<evidence type="ECO:0000255" key="1">
    <source>
        <dbReference type="HAMAP-Rule" id="MF_00719"/>
    </source>
</evidence>
<protein>
    <recommendedName>
        <fullName evidence="1">Adenosylcobinamide-GDP ribazoletransferase</fullName>
        <ecNumber evidence="1">2.7.8.26</ecNumber>
    </recommendedName>
    <alternativeName>
        <fullName evidence="1">Cobalamin synthase</fullName>
    </alternativeName>
    <alternativeName>
        <fullName evidence="1">Cobalamin-5'-phosphate synthase</fullName>
    </alternativeName>
</protein>
<gene>
    <name evidence="1" type="primary">cobS</name>
    <name type="ordered locus">SO_1036</name>
</gene>
<sequence length="262" mass="28675">MSERESWHKEIDLFFVAMGYFTRIPMPKWVEVDADKLNKASRYFGLVGLLVGLLSAIIFWLTQNWLPAGVSVLLSMLTGILLTGGFHEDGLADTFDGFGGGWTAEDKLRIMKDSRLGSYGALALIMVLLLKWQLLVELALYDPVVAGSAMIVAHTVSRVVAASLIFTETYVRDDETSKSKPLAQHQGINDLFILIASGVLVLLVLKGIAALSLLLVMIGLRRLIVVIFRRQIGGYTGDTLGAAQQICEIVCYFVLLVVGGIL</sequence>
<dbReference type="EC" id="2.7.8.26" evidence="1"/>
<dbReference type="EMBL" id="AE014299">
    <property type="protein sequence ID" value="AAN54109.1"/>
    <property type="molecule type" value="Genomic_DNA"/>
</dbReference>
<dbReference type="RefSeq" id="NP_716664.1">
    <property type="nucleotide sequence ID" value="NC_004347.2"/>
</dbReference>
<dbReference type="RefSeq" id="WP_011071295.1">
    <property type="nucleotide sequence ID" value="NC_004347.2"/>
</dbReference>
<dbReference type="STRING" id="211586.SO_1036"/>
<dbReference type="PaxDb" id="211586-SO_1036"/>
<dbReference type="KEGG" id="son:SO_1036"/>
<dbReference type="PATRIC" id="fig|211586.12.peg.993"/>
<dbReference type="eggNOG" id="COG0368">
    <property type="taxonomic scope" value="Bacteria"/>
</dbReference>
<dbReference type="HOGENOM" id="CLU_057426_1_1_6"/>
<dbReference type="OrthoDB" id="9794626at2"/>
<dbReference type="PhylomeDB" id="Q8EI17"/>
<dbReference type="BioCyc" id="SONE211586:G1GMP-959-MONOMER"/>
<dbReference type="UniPathway" id="UPA00148">
    <property type="reaction ID" value="UER00238"/>
</dbReference>
<dbReference type="Proteomes" id="UP000008186">
    <property type="component" value="Chromosome"/>
</dbReference>
<dbReference type="GO" id="GO:0005886">
    <property type="term" value="C:plasma membrane"/>
    <property type="evidence" value="ECO:0007669"/>
    <property type="project" value="UniProtKB-SubCell"/>
</dbReference>
<dbReference type="GO" id="GO:0051073">
    <property type="term" value="F:adenosylcobinamide-GDP ribazoletransferase activity"/>
    <property type="evidence" value="ECO:0007669"/>
    <property type="project" value="UniProtKB-UniRule"/>
</dbReference>
<dbReference type="GO" id="GO:0008818">
    <property type="term" value="F:cobalamin 5'-phosphate synthase activity"/>
    <property type="evidence" value="ECO:0007669"/>
    <property type="project" value="UniProtKB-UniRule"/>
</dbReference>
<dbReference type="GO" id="GO:0009236">
    <property type="term" value="P:cobalamin biosynthetic process"/>
    <property type="evidence" value="ECO:0000318"/>
    <property type="project" value="GO_Central"/>
</dbReference>
<dbReference type="HAMAP" id="MF_00719">
    <property type="entry name" value="CobS"/>
    <property type="match status" value="1"/>
</dbReference>
<dbReference type="InterPro" id="IPR003805">
    <property type="entry name" value="CobS"/>
</dbReference>
<dbReference type="NCBIfam" id="TIGR00317">
    <property type="entry name" value="cobS"/>
    <property type="match status" value="1"/>
</dbReference>
<dbReference type="NCBIfam" id="NF001277">
    <property type="entry name" value="PRK00235.1-3"/>
    <property type="match status" value="1"/>
</dbReference>
<dbReference type="PANTHER" id="PTHR34148">
    <property type="entry name" value="ADENOSYLCOBINAMIDE-GDP RIBAZOLETRANSFERASE"/>
    <property type="match status" value="1"/>
</dbReference>
<dbReference type="PANTHER" id="PTHR34148:SF1">
    <property type="entry name" value="ADENOSYLCOBINAMIDE-GDP RIBAZOLETRANSFERASE"/>
    <property type="match status" value="1"/>
</dbReference>
<dbReference type="Pfam" id="PF02654">
    <property type="entry name" value="CobS"/>
    <property type="match status" value="1"/>
</dbReference>
<keyword id="KW-0997">Cell inner membrane</keyword>
<keyword id="KW-1003">Cell membrane</keyword>
<keyword id="KW-0169">Cobalamin biosynthesis</keyword>
<keyword id="KW-0460">Magnesium</keyword>
<keyword id="KW-0472">Membrane</keyword>
<keyword id="KW-1185">Reference proteome</keyword>
<keyword id="KW-0808">Transferase</keyword>
<keyword id="KW-0812">Transmembrane</keyword>
<keyword id="KW-1133">Transmembrane helix</keyword>
<proteinExistence type="inferred from homology"/>
<reference key="1">
    <citation type="journal article" date="2002" name="Nat. Biotechnol.">
        <title>Genome sequence of the dissimilatory metal ion-reducing bacterium Shewanella oneidensis.</title>
        <authorList>
            <person name="Heidelberg J.F."/>
            <person name="Paulsen I.T."/>
            <person name="Nelson K.E."/>
            <person name="Gaidos E.J."/>
            <person name="Nelson W.C."/>
            <person name="Read T.D."/>
            <person name="Eisen J.A."/>
            <person name="Seshadri R."/>
            <person name="Ward N.L."/>
            <person name="Methe B.A."/>
            <person name="Clayton R.A."/>
            <person name="Meyer T."/>
            <person name="Tsapin A."/>
            <person name="Scott J."/>
            <person name="Beanan M.J."/>
            <person name="Brinkac L.M."/>
            <person name="Daugherty S.C."/>
            <person name="DeBoy R.T."/>
            <person name="Dodson R.J."/>
            <person name="Durkin A.S."/>
            <person name="Haft D.H."/>
            <person name="Kolonay J.F."/>
            <person name="Madupu R."/>
            <person name="Peterson J.D."/>
            <person name="Umayam L.A."/>
            <person name="White O."/>
            <person name="Wolf A.M."/>
            <person name="Vamathevan J.J."/>
            <person name="Weidman J.F."/>
            <person name="Impraim M."/>
            <person name="Lee K."/>
            <person name="Berry K.J."/>
            <person name="Lee C."/>
            <person name="Mueller J."/>
            <person name="Khouri H.M."/>
            <person name="Gill J."/>
            <person name="Utterback T.R."/>
            <person name="McDonald L.A."/>
            <person name="Feldblyum T.V."/>
            <person name="Smith H.O."/>
            <person name="Venter J.C."/>
            <person name="Nealson K.H."/>
            <person name="Fraser C.M."/>
        </authorList>
    </citation>
    <scope>NUCLEOTIDE SEQUENCE [LARGE SCALE GENOMIC DNA]</scope>
    <source>
        <strain>ATCC 700550 / JCM 31522 / CIP 106686 / LMG 19005 / NCIMB 14063 / MR-1</strain>
    </source>
</reference>